<gene>
    <name type="primary">CTSK</name>
</gene>
<proteinExistence type="evidence at protein level"/>
<organism>
    <name type="scientific">Oryctolagus cuniculus</name>
    <name type="common">Rabbit</name>
    <dbReference type="NCBI Taxonomy" id="9986"/>
    <lineage>
        <taxon>Eukaryota</taxon>
        <taxon>Metazoa</taxon>
        <taxon>Chordata</taxon>
        <taxon>Craniata</taxon>
        <taxon>Vertebrata</taxon>
        <taxon>Euteleostomi</taxon>
        <taxon>Mammalia</taxon>
        <taxon>Eutheria</taxon>
        <taxon>Euarchontoglires</taxon>
        <taxon>Glires</taxon>
        <taxon>Lagomorpha</taxon>
        <taxon>Leporidae</taxon>
        <taxon>Oryctolagus</taxon>
    </lineage>
</organism>
<feature type="signal peptide" evidence="3">
    <location>
        <begin position="1"/>
        <end position="15"/>
    </location>
</feature>
<feature type="propeptide" id="PRO_0000026305" description="Activation peptide">
    <location>
        <begin position="16"/>
        <end position="114"/>
    </location>
</feature>
<feature type="chain" id="PRO_0000026306" description="Cathepsin K">
    <location>
        <begin position="115"/>
        <end position="329"/>
    </location>
</feature>
<feature type="active site" evidence="1">
    <location>
        <position position="139"/>
    </location>
</feature>
<feature type="active site" evidence="1">
    <location>
        <position position="276"/>
    </location>
</feature>
<feature type="active site" evidence="1">
    <location>
        <position position="296"/>
    </location>
</feature>
<feature type="glycosylation site" description="N-linked (GlcNAc...) asparagine" evidence="3">
    <location>
        <position position="103"/>
    </location>
</feature>
<feature type="glycosylation site" description="N-linked (GlcNAc...) asparagine" evidence="3">
    <location>
        <position position="268"/>
    </location>
</feature>
<feature type="disulfide bond" evidence="7">
    <location>
        <begin position="136"/>
        <end position="177"/>
    </location>
</feature>
<feature type="disulfide bond" evidence="7">
    <location>
        <begin position="170"/>
        <end position="210"/>
    </location>
</feature>
<feature type="disulfide bond" evidence="7">
    <location>
        <begin position="269"/>
        <end position="318"/>
    </location>
</feature>
<feature type="helix" evidence="9">
    <location>
        <begin position="121"/>
        <end position="124"/>
    </location>
</feature>
<feature type="helix" evidence="9">
    <location>
        <begin position="139"/>
        <end position="156"/>
    </location>
</feature>
<feature type="helix" evidence="9">
    <location>
        <begin position="164"/>
        <end position="170"/>
    </location>
</feature>
<feature type="helix" evidence="9">
    <location>
        <begin position="176"/>
        <end position="178"/>
    </location>
</feature>
<feature type="helix" evidence="9">
    <location>
        <begin position="182"/>
        <end position="192"/>
    </location>
</feature>
<feature type="strand" evidence="9">
    <location>
        <begin position="195"/>
        <end position="197"/>
    </location>
</feature>
<feature type="helix" evidence="9">
    <location>
        <begin position="198"/>
        <end position="200"/>
    </location>
</feature>
<feature type="helix" evidence="9">
    <location>
        <begin position="214"/>
        <end position="216"/>
    </location>
</feature>
<feature type="strand" evidence="9">
    <location>
        <begin position="217"/>
        <end position="219"/>
    </location>
</feature>
<feature type="strand" evidence="9">
    <location>
        <begin position="224"/>
        <end position="226"/>
    </location>
</feature>
<feature type="helix" evidence="9">
    <location>
        <begin position="232"/>
        <end position="241"/>
    </location>
</feature>
<feature type="strand" evidence="9">
    <location>
        <begin position="245"/>
        <end position="249"/>
    </location>
</feature>
<feature type="helix" evidence="9">
    <location>
        <begin position="254"/>
        <end position="257"/>
    </location>
</feature>
<feature type="strand" evidence="9">
    <location>
        <begin position="261"/>
        <end position="264"/>
    </location>
</feature>
<feature type="strand" evidence="9">
    <location>
        <begin position="276"/>
        <end position="286"/>
    </location>
</feature>
<feature type="strand" evidence="9">
    <location>
        <begin position="289"/>
        <end position="295"/>
    </location>
</feature>
<feature type="strand" evidence="9">
    <location>
        <begin position="307"/>
        <end position="316"/>
    </location>
</feature>
<feature type="helix" evidence="9">
    <location>
        <begin position="317"/>
        <end position="319"/>
    </location>
</feature>
<feature type="strand" evidence="9">
    <location>
        <begin position="325"/>
        <end position="327"/>
    </location>
</feature>
<accession>P43236</accession>
<comment type="function">
    <text evidence="2">Thiol protease involved in osteoclastic bone resorption and may participate partially in the disorder of bone remodeling. Displays potent endoprotease activity against fibrinogen at acid pH. May play an important role in extracellular matrix degradation. Involved in the release of thyroid hormone thyroxine (T4) by limited proteolysis of TG/thyroglobulin in the thyroid follicle lumen.</text>
</comment>
<comment type="catalytic activity">
    <reaction>
        <text>Broad proteolytic activity. With small-molecule substrates and inhibitors, the major determinant of specificity is P2, which is preferably Leu, Met &gt; Phe, and not Arg.</text>
        <dbReference type="EC" id="3.4.22.38"/>
    </reaction>
</comment>
<comment type="subcellular location">
    <subcellularLocation>
        <location evidence="2">Lysosome</location>
    </subcellularLocation>
    <subcellularLocation>
        <location evidence="2">Secreted</location>
    </subcellularLocation>
    <subcellularLocation>
        <location evidence="2">Apical cell membrane</location>
        <topology evidence="2">Peripheral membrane protein</topology>
        <orientation evidence="2">Extracellular side</orientation>
    </subcellularLocation>
    <text evidence="2">Localizes to the lumen of thyroid follicles and to the apical membrane of thyroid epithelial cells.</text>
</comment>
<comment type="tissue specificity">
    <text evidence="8">Predominantly expressed in osteclasts (bones).</text>
</comment>
<comment type="similarity">
    <text evidence="4 5 6">Belongs to the peptidase C1 family.</text>
</comment>
<keyword id="KW-0002">3D-structure</keyword>
<keyword id="KW-1003">Cell membrane</keyword>
<keyword id="KW-1015">Disulfide bond</keyword>
<keyword id="KW-0325">Glycoprotein</keyword>
<keyword id="KW-0378">Hydrolase</keyword>
<keyword id="KW-0458">Lysosome</keyword>
<keyword id="KW-0472">Membrane</keyword>
<keyword id="KW-0645">Protease</keyword>
<keyword id="KW-1185">Reference proteome</keyword>
<keyword id="KW-0964">Secreted</keyword>
<keyword id="KW-0732">Signal</keyword>
<keyword id="KW-0788">Thiol protease</keyword>
<keyword id="KW-0865">Zymogen</keyword>
<evidence type="ECO:0000250" key="1"/>
<evidence type="ECO:0000250" key="2">
    <source>
        <dbReference type="UniProtKB" id="P43235"/>
    </source>
</evidence>
<evidence type="ECO:0000255" key="3"/>
<evidence type="ECO:0000255" key="4">
    <source>
        <dbReference type="PROSITE-ProRule" id="PRU10088"/>
    </source>
</evidence>
<evidence type="ECO:0000255" key="5">
    <source>
        <dbReference type="PROSITE-ProRule" id="PRU10089"/>
    </source>
</evidence>
<evidence type="ECO:0000255" key="6">
    <source>
        <dbReference type="PROSITE-ProRule" id="PRU10090"/>
    </source>
</evidence>
<evidence type="ECO:0000269" key="7">
    <source>
    </source>
</evidence>
<evidence type="ECO:0000269" key="8">
    <source>
    </source>
</evidence>
<evidence type="ECO:0007829" key="9">
    <source>
        <dbReference type="PDB" id="2F7D"/>
    </source>
</evidence>
<reference key="1">
    <citation type="journal article" date="1994" name="J. Biol. Chem.">
        <title>Molecular cloning of a possible cysteine proteinase predominantly expressed in osteoclasts.</title>
        <authorList>
            <person name="Tezuka K."/>
            <person name="Tezuka Y."/>
            <person name="Maejima A."/>
            <person name="Sato T."/>
            <person name="Nemoto K."/>
            <person name="Kamioka H."/>
            <person name="Hakeda Y."/>
            <person name="Kumegawa M."/>
        </authorList>
    </citation>
    <scope>NUCLEOTIDE SEQUENCE [MRNA]</scope>
    <scope>TISSUE SPECIFICITY</scope>
    <source>
        <tissue>Bone</tissue>
    </source>
</reference>
<reference key="2">
    <citation type="journal article" date="2006" name="J. Med. Chem.">
        <title>Beta-substituted cyclohexanecarboxamide: a nonpeptidic framework for the design of potent inhibitors of cathepsin K.</title>
        <authorList>
            <person name="Crane S.N."/>
            <person name="Black W.C."/>
            <person name="Palmer J.T."/>
            <person name="Davis D.E."/>
            <person name="Setti E."/>
            <person name="Robichaud J."/>
            <person name="Paquet J."/>
            <person name="Oballa R.M."/>
            <person name="Bayly C.I."/>
            <person name="McKay D.J."/>
            <person name="Somoza J.R."/>
            <person name="Chauret N."/>
            <person name="Seto C."/>
            <person name="Scheigetz J."/>
            <person name="Wesolowski G."/>
            <person name="Masse F."/>
            <person name="Desmarais S."/>
            <person name="Ouellet M."/>
        </authorList>
    </citation>
    <scope>X-RAY CRYSTALLOGRAPHY (1.9 ANGSTROMS) OF 115-329 IN COMPLEX WITH INHIBITORS</scope>
    <scope>DISULFIDE BONDS</scope>
</reference>
<sequence length="329" mass="36870">MWGLKVLLLPVVSFALHPEEILDTQWELWKKTYSKQYNSKVDEISRRLIWEKNLKHISIHNLEASLGVHTYELAMNHLGDMTSEEVVQKMTGLKVPPSRSHSNDTLYIPDWEGRTPDSIDYRKKGYVTPVKNQGQCGSCWAFSSVGALEGQLKKKTGKLLNLSPQNLVDCVSENYGCGGGYMTNAFQYVQRNRGIDSEDAYPYVGQDESCMYNPTGKAAKCRGYREIPEGNEKALKRAVARVGPVSVAIDASLTSFQFYSKGVYYDENCSSDNVNHAVLAVGYGIQKGNKHWIIKNSWGESWGNKGYILMARNKNNACGIANLASFPKM</sequence>
<name>CATK_RABIT</name>
<protein>
    <recommendedName>
        <fullName>Cathepsin K</fullName>
        <ecNumber>3.4.22.38</ecNumber>
    </recommendedName>
    <alternativeName>
        <fullName>Protein OC-2</fullName>
    </alternativeName>
</protein>
<dbReference type="EC" id="3.4.22.38"/>
<dbReference type="EMBL" id="D14036">
    <property type="protein sequence ID" value="BAA03125.1"/>
    <property type="molecule type" value="mRNA"/>
</dbReference>
<dbReference type="PIR" id="A49868">
    <property type="entry name" value="A49868"/>
</dbReference>
<dbReference type="RefSeq" id="NP_001076110.1">
    <property type="nucleotide sequence ID" value="NM_001082641.1"/>
</dbReference>
<dbReference type="RefSeq" id="XP_017200979.1">
    <property type="nucleotide sequence ID" value="XM_017345490.3"/>
</dbReference>
<dbReference type="PDB" id="2F7D">
    <property type="method" value="X-ray"/>
    <property type="resolution" value="1.90 A"/>
    <property type="chains" value="A=115-329"/>
</dbReference>
<dbReference type="PDBsum" id="2F7D"/>
<dbReference type="SMR" id="P43236"/>
<dbReference type="FunCoup" id="P43236">
    <property type="interactions" value="37"/>
</dbReference>
<dbReference type="STRING" id="9986.ENSOCUP00000009540"/>
<dbReference type="BindingDB" id="P43236"/>
<dbReference type="ChEMBL" id="CHEMBL3349"/>
<dbReference type="MEROPS" id="C01.036"/>
<dbReference type="MEROPS" id="I29.007"/>
<dbReference type="GlyCosmos" id="P43236">
    <property type="glycosylation" value="2 sites, No reported glycans"/>
</dbReference>
<dbReference type="PaxDb" id="9986-ENSOCUP00000009540"/>
<dbReference type="Ensembl" id="ENSOCUT00000011087.2">
    <property type="protein sequence ID" value="ENSOCUP00000009540.2"/>
    <property type="gene ID" value="ENSOCUG00000011090.2"/>
</dbReference>
<dbReference type="GeneID" id="100009334"/>
<dbReference type="KEGG" id="ocu:100009334"/>
<dbReference type="CTD" id="1513"/>
<dbReference type="eggNOG" id="KOG1543">
    <property type="taxonomic scope" value="Eukaryota"/>
</dbReference>
<dbReference type="GeneTree" id="ENSGT00940000157759"/>
<dbReference type="HOGENOM" id="CLU_012184_1_2_1"/>
<dbReference type="InParanoid" id="P43236"/>
<dbReference type="OMA" id="EGETCCC"/>
<dbReference type="OrthoDB" id="65740at2759"/>
<dbReference type="TreeFam" id="TF313739"/>
<dbReference type="EvolutionaryTrace" id="P43236"/>
<dbReference type="PRO" id="PR:P43236"/>
<dbReference type="Proteomes" id="UP000001811">
    <property type="component" value="Chromosome 13"/>
</dbReference>
<dbReference type="Bgee" id="ENSOCUG00000011090">
    <property type="expression patterns" value="Expressed in aorta and 18 other cell types or tissues"/>
</dbReference>
<dbReference type="GO" id="GO:0016324">
    <property type="term" value="C:apical plasma membrane"/>
    <property type="evidence" value="ECO:0007669"/>
    <property type="project" value="UniProtKB-SubCell"/>
</dbReference>
<dbReference type="GO" id="GO:0009897">
    <property type="term" value="C:external side of plasma membrane"/>
    <property type="evidence" value="ECO:0007669"/>
    <property type="project" value="Ensembl"/>
</dbReference>
<dbReference type="GO" id="GO:0005615">
    <property type="term" value="C:extracellular space"/>
    <property type="evidence" value="ECO:0000250"/>
    <property type="project" value="UniProtKB"/>
</dbReference>
<dbReference type="GO" id="GO:0005764">
    <property type="term" value="C:lysosome"/>
    <property type="evidence" value="ECO:0000250"/>
    <property type="project" value="UniProtKB"/>
</dbReference>
<dbReference type="GO" id="GO:0005654">
    <property type="term" value="C:nucleoplasm"/>
    <property type="evidence" value="ECO:0007669"/>
    <property type="project" value="Ensembl"/>
</dbReference>
<dbReference type="GO" id="GO:0005518">
    <property type="term" value="F:collagen binding"/>
    <property type="evidence" value="ECO:0007669"/>
    <property type="project" value="Ensembl"/>
</dbReference>
<dbReference type="GO" id="GO:0004197">
    <property type="term" value="F:cysteine-type endopeptidase activity"/>
    <property type="evidence" value="ECO:0007669"/>
    <property type="project" value="UniProtKB-EC"/>
</dbReference>
<dbReference type="GO" id="GO:0001968">
    <property type="term" value="F:fibronectin binding"/>
    <property type="evidence" value="ECO:0007669"/>
    <property type="project" value="Ensembl"/>
</dbReference>
<dbReference type="GO" id="GO:0043394">
    <property type="term" value="F:proteoglycan binding"/>
    <property type="evidence" value="ECO:0007669"/>
    <property type="project" value="Ensembl"/>
</dbReference>
<dbReference type="GO" id="GO:0045453">
    <property type="term" value="P:bone resorption"/>
    <property type="evidence" value="ECO:0007669"/>
    <property type="project" value="Ensembl"/>
</dbReference>
<dbReference type="GO" id="GO:0030574">
    <property type="term" value="P:collagen catabolic process"/>
    <property type="evidence" value="ECO:0007669"/>
    <property type="project" value="Ensembl"/>
</dbReference>
<dbReference type="GO" id="GO:0061037">
    <property type="term" value="P:negative regulation of cartilage development"/>
    <property type="evidence" value="ECO:0007669"/>
    <property type="project" value="Ensembl"/>
</dbReference>
<dbReference type="GO" id="GO:0051603">
    <property type="term" value="P:proteolysis involved in protein catabolic process"/>
    <property type="evidence" value="ECO:0007669"/>
    <property type="project" value="Ensembl"/>
</dbReference>
<dbReference type="GO" id="GO:0006590">
    <property type="term" value="P:thyroid hormone generation"/>
    <property type="evidence" value="ECO:0000250"/>
    <property type="project" value="UniProtKB"/>
</dbReference>
<dbReference type="CDD" id="cd02248">
    <property type="entry name" value="Peptidase_C1A"/>
    <property type="match status" value="1"/>
</dbReference>
<dbReference type="FunFam" id="3.90.70.10:FF:000006">
    <property type="entry name" value="Cathepsin S"/>
    <property type="match status" value="1"/>
</dbReference>
<dbReference type="Gene3D" id="3.90.70.10">
    <property type="entry name" value="Cysteine proteinases"/>
    <property type="match status" value="1"/>
</dbReference>
<dbReference type="InterPro" id="IPR038765">
    <property type="entry name" value="Papain-like_cys_pep_sf"/>
</dbReference>
<dbReference type="InterPro" id="IPR025661">
    <property type="entry name" value="Pept_asp_AS"/>
</dbReference>
<dbReference type="InterPro" id="IPR000169">
    <property type="entry name" value="Pept_cys_AS"/>
</dbReference>
<dbReference type="InterPro" id="IPR025660">
    <property type="entry name" value="Pept_his_AS"/>
</dbReference>
<dbReference type="InterPro" id="IPR013128">
    <property type="entry name" value="Peptidase_C1A"/>
</dbReference>
<dbReference type="InterPro" id="IPR000668">
    <property type="entry name" value="Peptidase_C1A_C"/>
</dbReference>
<dbReference type="InterPro" id="IPR039417">
    <property type="entry name" value="Peptidase_C1A_papain-like"/>
</dbReference>
<dbReference type="InterPro" id="IPR013201">
    <property type="entry name" value="Prot_inhib_I29"/>
</dbReference>
<dbReference type="PANTHER" id="PTHR12411">
    <property type="entry name" value="CYSTEINE PROTEASE FAMILY C1-RELATED"/>
    <property type="match status" value="1"/>
</dbReference>
<dbReference type="Pfam" id="PF08246">
    <property type="entry name" value="Inhibitor_I29"/>
    <property type="match status" value="1"/>
</dbReference>
<dbReference type="Pfam" id="PF00112">
    <property type="entry name" value="Peptidase_C1"/>
    <property type="match status" value="1"/>
</dbReference>
<dbReference type="PRINTS" id="PR00705">
    <property type="entry name" value="PAPAIN"/>
</dbReference>
<dbReference type="SMART" id="SM00848">
    <property type="entry name" value="Inhibitor_I29"/>
    <property type="match status" value="1"/>
</dbReference>
<dbReference type="SMART" id="SM00645">
    <property type="entry name" value="Pept_C1"/>
    <property type="match status" value="1"/>
</dbReference>
<dbReference type="SUPFAM" id="SSF54001">
    <property type="entry name" value="Cysteine proteinases"/>
    <property type="match status" value="1"/>
</dbReference>
<dbReference type="PROSITE" id="PS00640">
    <property type="entry name" value="THIOL_PROTEASE_ASN"/>
    <property type="match status" value="1"/>
</dbReference>
<dbReference type="PROSITE" id="PS00139">
    <property type="entry name" value="THIOL_PROTEASE_CYS"/>
    <property type="match status" value="1"/>
</dbReference>
<dbReference type="PROSITE" id="PS00639">
    <property type="entry name" value="THIOL_PROTEASE_HIS"/>
    <property type="match status" value="1"/>
</dbReference>